<dbReference type="EC" id="3.6.5.-" evidence="2"/>
<dbReference type="EMBL" id="AK135971">
    <property type="protein sequence ID" value="BAE22753.1"/>
    <property type="molecule type" value="mRNA"/>
</dbReference>
<dbReference type="EMBL" id="BC147507">
    <property type="protein sequence ID" value="AAI47508.1"/>
    <property type="molecule type" value="mRNA"/>
</dbReference>
<dbReference type="CCDS" id="CCDS49202.1"/>
<dbReference type="RefSeq" id="NP_001029051.2">
    <property type="nucleotide sequence ID" value="NM_001033879.3"/>
</dbReference>
<dbReference type="SMR" id="Q3UX10"/>
<dbReference type="BioGRID" id="231990">
    <property type="interactions" value="5"/>
</dbReference>
<dbReference type="FunCoup" id="Q3UX10">
    <property type="interactions" value="216"/>
</dbReference>
<dbReference type="IntAct" id="Q3UX10">
    <property type="interactions" value="2"/>
</dbReference>
<dbReference type="MINT" id="Q3UX10"/>
<dbReference type="STRING" id="10090.ENSMUSP00000021639"/>
<dbReference type="iPTMnet" id="Q3UX10"/>
<dbReference type="PhosphoSitePlus" id="Q3UX10"/>
<dbReference type="jPOST" id="Q3UX10"/>
<dbReference type="PaxDb" id="10090-ENSMUSP00000021639"/>
<dbReference type="PeptideAtlas" id="Q3UX10"/>
<dbReference type="ProteomicsDB" id="263073"/>
<dbReference type="Pumba" id="Q3UX10"/>
<dbReference type="Antibodypedia" id="24080">
    <property type="antibodies" value="228 antibodies from 14 providers"/>
</dbReference>
<dbReference type="DNASU" id="238463"/>
<dbReference type="Ensembl" id="ENSMUST00000021639.8">
    <property type="protein sequence ID" value="ENSMUSP00000021639.7"/>
    <property type="gene ID" value="ENSMUSG00000021216.8"/>
</dbReference>
<dbReference type="GeneID" id="238463"/>
<dbReference type="KEGG" id="mmu:238463"/>
<dbReference type="UCSC" id="uc007pjg.2">
    <property type="organism name" value="mouse"/>
</dbReference>
<dbReference type="AGR" id="MGI:3588215"/>
<dbReference type="CTD" id="79861"/>
<dbReference type="MGI" id="MGI:3588215">
    <property type="gene designation" value="Tubal3"/>
</dbReference>
<dbReference type="VEuPathDB" id="HostDB:ENSMUSG00000021216"/>
<dbReference type="eggNOG" id="KOG1376">
    <property type="taxonomic scope" value="Eukaryota"/>
</dbReference>
<dbReference type="GeneTree" id="ENSGT00940000162594"/>
<dbReference type="HOGENOM" id="CLU_015718_0_0_1"/>
<dbReference type="InParanoid" id="Q3UX10"/>
<dbReference type="OMA" id="VYDICHH"/>
<dbReference type="OrthoDB" id="6073114at2759"/>
<dbReference type="PhylomeDB" id="Q3UX10"/>
<dbReference type="TreeFam" id="TF300314"/>
<dbReference type="Reactome" id="R-MMU-190840">
    <property type="pathway name" value="Microtubule-dependent trafficking of connexons from Golgi to the plasma membrane"/>
</dbReference>
<dbReference type="Reactome" id="R-MMU-2132295">
    <property type="pathway name" value="MHC class II antigen presentation"/>
</dbReference>
<dbReference type="Reactome" id="R-MMU-2467813">
    <property type="pathway name" value="Separation of Sister Chromatids"/>
</dbReference>
<dbReference type="Reactome" id="R-MMU-2500257">
    <property type="pathway name" value="Resolution of Sister Chromatid Cohesion"/>
</dbReference>
<dbReference type="Reactome" id="R-MMU-3371497">
    <property type="pathway name" value="HSP90 chaperone cycle for steroid hormone receptors (SHR) in the presence of ligand"/>
</dbReference>
<dbReference type="Reactome" id="R-MMU-380320">
    <property type="pathway name" value="Recruitment of NuMA to mitotic centrosomes"/>
</dbReference>
<dbReference type="Reactome" id="R-MMU-437239">
    <property type="pathway name" value="Recycling pathway of L1"/>
</dbReference>
<dbReference type="Reactome" id="R-MMU-5617833">
    <property type="pathway name" value="Cilium Assembly"/>
</dbReference>
<dbReference type="Reactome" id="R-MMU-5626467">
    <property type="pathway name" value="RHO GTPases activate IQGAPs"/>
</dbReference>
<dbReference type="Reactome" id="R-MMU-5663220">
    <property type="pathway name" value="RHO GTPases Activate Formins"/>
</dbReference>
<dbReference type="Reactome" id="R-MMU-6807878">
    <property type="pathway name" value="COPI-mediated anterograde transport"/>
</dbReference>
<dbReference type="Reactome" id="R-MMU-6811434">
    <property type="pathway name" value="COPI-dependent Golgi-to-ER retrograde traffic"/>
</dbReference>
<dbReference type="Reactome" id="R-MMU-6811436">
    <property type="pathway name" value="COPI-independent Golgi-to-ER retrograde traffic"/>
</dbReference>
<dbReference type="Reactome" id="R-MMU-68877">
    <property type="pathway name" value="Mitotic Prometaphase"/>
</dbReference>
<dbReference type="Reactome" id="R-MMU-8852276">
    <property type="pathway name" value="The role of GTSE1 in G2/M progression after G2 checkpoint"/>
</dbReference>
<dbReference type="Reactome" id="R-MMU-8955332">
    <property type="pathway name" value="Carboxyterminal post-translational modifications of tubulin"/>
</dbReference>
<dbReference type="Reactome" id="R-MMU-9646399">
    <property type="pathway name" value="Aggrephagy"/>
</dbReference>
<dbReference type="Reactome" id="R-MMU-9648025">
    <property type="pathway name" value="EML4 and NUDC in mitotic spindle formation"/>
</dbReference>
<dbReference type="Reactome" id="R-MMU-9668328">
    <property type="pathway name" value="Sealing of the nuclear envelope (NE) by ESCRT-III"/>
</dbReference>
<dbReference type="Reactome" id="R-MMU-983189">
    <property type="pathway name" value="Kinesins"/>
</dbReference>
<dbReference type="Reactome" id="R-MMU-9833482">
    <property type="pathway name" value="PKR-mediated signaling"/>
</dbReference>
<dbReference type="BioGRID-ORCS" id="238463">
    <property type="hits" value="6 hits in 77 CRISPR screens"/>
</dbReference>
<dbReference type="ChiTaRS" id="Tubal3">
    <property type="organism name" value="mouse"/>
</dbReference>
<dbReference type="PRO" id="PR:Q3UX10"/>
<dbReference type="Proteomes" id="UP000000589">
    <property type="component" value="Chromosome 13"/>
</dbReference>
<dbReference type="RNAct" id="Q3UX10">
    <property type="molecule type" value="protein"/>
</dbReference>
<dbReference type="Bgee" id="ENSMUSG00000021216">
    <property type="expression patterns" value="Expressed in jejunum and 14 other cell types or tissues"/>
</dbReference>
<dbReference type="GO" id="GO:0005737">
    <property type="term" value="C:cytoplasm"/>
    <property type="evidence" value="ECO:0007669"/>
    <property type="project" value="UniProtKB-KW"/>
</dbReference>
<dbReference type="GO" id="GO:0005874">
    <property type="term" value="C:microtubule"/>
    <property type="evidence" value="ECO:0007669"/>
    <property type="project" value="UniProtKB-KW"/>
</dbReference>
<dbReference type="GO" id="GO:0005525">
    <property type="term" value="F:GTP binding"/>
    <property type="evidence" value="ECO:0007669"/>
    <property type="project" value="UniProtKB-KW"/>
</dbReference>
<dbReference type="GO" id="GO:0016787">
    <property type="term" value="F:hydrolase activity"/>
    <property type="evidence" value="ECO:0007669"/>
    <property type="project" value="UniProtKB-KW"/>
</dbReference>
<dbReference type="GO" id="GO:0046872">
    <property type="term" value="F:metal ion binding"/>
    <property type="evidence" value="ECO:0007669"/>
    <property type="project" value="UniProtKB-KW"/>
</dbReference>
<dbReference type="GO" id="GO:0005200">
    <property type="term" value="F:structural constituent of cytoskeleton"/>
    <property type="evidence" value="ECO:0007669"/>
    <property type="project" value="InterPro"/>
</dbReference>
<dbReference type="GO" id="GO:0007017">
    <property type="term" value="P:microtubule-based process"/>
    <property type="evidence" value="ECO:0007669"/>
    <property type="project" value="InterPro"/>
</dbReference>
<dbReference type="CDD" id="cd02186">
    <property type="entry name" value="alpha_tubulin"/>
    <property type="match status" value="1"/>
</dbReference>
<dbReference type="FunFam" id="1.10.287.600:FF:000001">
    <property type="entry name" value="Tubulin alpha chain"/>
    <property type="match status" value="1"/>
</dbReference>
<dbReference type="FunFam" id="3.30.1330.20:FF:000001">
    <property type="entry name" value="Tubulin alpha chain"/>
    <property type="match status" value="1"/>
</dbReference>
<dbReference type="FunFam" id="3.40.50.1440:FF:000007">
    <property type="entry name" value="Tubulin alpha chain"/>
    <property type="match status" value="1"/>
</dbReference>
<dbReference type="Gene3D" id="1.10.287.600">
    <property type="entry name" value="Helix hairpin bin"/>
    <property type="match status" value="1"/>
</dbReference>
<dbReference type="Gene3D" id="3.30.1330.20">
    <property type="entry name" value="Tubulin/FtsZ, C-terminal domain"/>
    <property type="match status" value="1"/>
</dbReference>
<dbReference type="Gene3D" id="3.40.50.1440">
    <property type="entry name" value="Tubulin/FtsZ, GTPase domain"/>
    <property type="match status" value="1"/>
</dbReference>
<dbReference type="InterPro" id="IPR002452">
    <property type="entry name" value="Alpha_tubulin"/>
</dbReference>
<dbReference type="InterPro" id="IPR008280">
    <property type="entry name" value="Tub_FtsZ_C"/>
</dbReference>
<dbReference type="InterPro" id="IPR000217">
    <property type="entry name" value="Tubulin"/>
</dbReference>
<dbReference type="InterPro" id="IPR037103">
    <property type="entry name" value="Tubulin/FtsZ-like_C"/>
</dbReference>
<dbReference type="InterPro" id="IPR018316">
    <property type="entry name" value="Tubulin/FtsZ_2-layer-sand-dom"/>
</dbReference>
<dbReference type="InterPro" id="IPR036525">
    <property type="entry name" value="Tubulin/FtsZ_GTPase_sf"/>
</dbReference>
<dbReference type="InterPro" id="IPR023123">
    <property type="entry name" value="Tubulin_C"/>
</dbReference>
<dbReference type="InterPro" id="IPR017975">
    <property type="entry name" value="Tubulin_CS"/>
</dbReference>
<dbReference type="InterPro" id="IPR003008">
    <property type="entry name" value="Tubulin_FtsZ_GTPase"/>
</dbReference>
<dbReference type="PANTHER" id="PTHR11588">
    <property type="entry name" value="TUBULIN"/>
    <property type="match status" value="1"/>
</dbReference>
<dbReference type="Pfam" id="PF00091">
    <property type="entry name" value="Tubulin"/>
    <property type="match status" value="1"/>
</dbReference>
<dbReference type="Pfam" id="PF03953">
    <property type="entry name" value="Tubulin_C"/>
    <property type="match status" value="1"/>
</dbReference>
<dbReference type="PRINTS" id="PR01162">
    <property type="entry name" value="ALPHATUBULIN"/>
</dbReference>
<dbReference type="PRINTS" id="PR01161">
    <property type="entry name" value="TUBULIN"/>
</dbReference>
<dbReference type="SMART" id="SM00864">
    <property type="entry name" value="Tubulin"/>
    <property type="match status" value="1"/>
</dbReference>
<dbReference type="SMART" id="SM00865">
    <property type="entry name" value="Tubulin_C"/>
    <property type="match status" value="1"/>
</dbReference>
<dbReference type="SUPFAM" id="SSF55307">
    <property type="entry name" value="Tubulin C-terminal domain-like"/>
    <property type="match status" value="1"/>
</dbReference>
<dbReference type="SUPFAM" id="SSF52490">
    <property type="entry name" value="Tubulin nucleotide-binding domain-like"/>
    <property type="match status" value="1"/>
</dbReference>
<dbReference type="PROSITE" id="PS00227">
    <property type="entry name" value="TUBULIN"/>
    <property type="match status" value="1"/>
</dbReference>
<feature type="chain" id="PRO_0000313710" description="Tubulin alpha chain-like 3">
    <location>
        <begin position="1"/>
        <end position="446"/>
    </location>
</feature>
<feature type="short sequence motif" description="MREC motif" evidence="2">
    <location>
        <begin position="1"/>
        <end position="4"/>
    </location>
</feature>
<feature type="active site" evidence="2">
    <location>
        <position position="261"/>
    </location>
</feature>
<feature type="binding site" evidence="2">
    <location>
        <position position="11"/>
    </location>
    <ligand>
        <name>GTP</name>
        <dbReference type="ChEBI" id="CHEBI:37565"/>
    </ligand>
</feature>
<feature type="binding site" evidence="2">
    <location>
        <position position="78"/>
    </location>
    <ligand>
        <name>GTP</name>
        <dbReference type="ChEBI" id="CHEBI:37565"/>
    </ligand>
</feature>
<feature type="binding site" evidence="2">
    <location>
        <position position="78"/>
    </location>
    <ligand>
        <name>Mg(2+)</name>
        <dbReference type="ChEBI" id="CHEBI:18420"/>
    </ligand>
</feature>
<feature type="binding site" evidence="2">
    <location>
        <position position="147"/>
    </location>
    <ligand>
        <name>GTP</name>
        <dbReference type="ChEBI" id="CHEBI:37565"/>
    </ligand>
</feature>
<feature type="binding site" evidence="2">
    <location>
        <position position="151"/>
    </location>
    <ligand>
        <name>GTP</name>
        <dbReference type="ChEBI" id="CHEBI:37565"/>
    </ligand>
</feature>
<feature type="binding site" evidence="2">
    <location>
        <position position="152"/>
    </location>
    <ligand>
        <name>GTP</name>
        <dbReference type="ChEBI" id="CHEBI:37565"/>
    </ligand>
</feature>
<feature type="binding site" evidence="2">
    <location>
        <position position="186"/>
    </location>
    <ligand>
        <name>GTP</name>
        <dbReference type="ChEBI" id="CHEBI:37565"/>
    </ligand>
</feature>
<feature type="binding site" evidence="2">
    <location>
        <position position="213"/>
    </location>
    <ligand>
        <name>GTP</name>
        <dbReference type="ChEBI" id="CHEBI:37565"/>
    </ligand>
</feature>
<feature type="binding site" evidence="2">
    <location>
        <position position="235"/>
    </location>
    <ligand>
        <name>GTP</name>
        <dbReference type="ChEBI" id="CHEBI:37565"/>
    </ligand>
</feature>
<feature type="sequence conflict" description="In Ref. 1; BAE22753." evidence="5" ref="1">
    <original>E</original>
    <variation>G</variation>
    <location>
        <position position="227"/>
    </location>
</feature>
<comment type="function">
    <text>Tubulin is the major constituent of microtubules, a cylinder consisting of laterally associated linear protofilaments composed of alpha- and beta-tubulin heterodimers. Microtubules grow by the addition of GTP-tubulin dimers to the microtubule end, where a stabilizing cap forms. Below the cap, tubulin dimers are in GDP-bound state, owing to GTPase activity of alpha-tubulin.</text>
</comment>
<comment type="catalytic activity">
    <reaction evidence="2">
        <text>GTP + H2O = GDP + phosphate + H(+)</text>
        <dbReference type="Rhea" id="RHEA:19669"/>
        <dbReference type="ChEBI" id="CHEBI:15377"/>
        <dbReference type="ChEBI" id="CHEBI:15378"/>
        <dbReference type="ChEBI" id="CHEBI:37565"/>
        <dbReference type="ChEBI" id="CHEBI:43474"/>
        <dbReference type="ChEBI" id="CHEBI:58189"/>
    </reaction>
    <physiologicalReaction direction="left-to-right" evidence="2">
        <dbReference type="Rhea" id="RHEA:19670"/>
    </physiologicalReaction>
</comment>
<comment type="cofactor">
    <cofactor evidence="2">
        <name>Mg(2+)</name>
        <dbReference type="ChEBI" id="CHEBI:18420"/>
    </cofactor>
</comment>
<comment type="subunit">
    <text>Dimer of alpha and beta chains. A typical microtubule is a hollow water-filled tube with an outer diameter of 25 nm and an inner diameter of 15 nM. Alpha-beta heterodimers associate head-to-tail to form protofilaments running lengthwise along the microtubule wall with the beta-tubulin subunit facing the microtubule plus end conferring a structural polarity. Microtubules usually have 13 protofilaments but different protofilament numbers can be found in some organisms and specialized cells.</text>
</comment>
<comment type="subcellular location">
    <subcellularLocation>
        <location evidence="1">Cytoplasm</location>
        <location evidence="1">Cytoskeleton</location>
    </subcellularLocation>
</comment>
<comment type="domain">
    <text evidence="2">The MREC motif may be critical for tubulin autoregulation.</text>
</comment>
<comment type="PTM">
    <text evidence="3">Some glutamate residues at the C-terminus are polyglycylated, resulting in polyglycine chains on the gamma-carboxyl group. Glycylation is mainly limited to tubulin incorporated into axonemes (cilia and flagella) whereas glutamylation is prevalent in neuronal cells, centrioles, axonemes, and the mitotic spindle. Both modifications can coexist on the same protein on adjacent residues, and lowering polyglycylation levels increases polyglutamylation, and reciprocally. Cilia and flagella glycylation is required for their stability and maintenance. Flagella glycylation controls sperm motility.</text>
</comment>
<comment type="PTM">
    <text evidence="3 4">Some glutamate residues at the C-terminus are polyglutamylated, resulting in polyglutamate chains on the gamma-carboxyl group (By similarity). Polyglutamylation plays a key role in microtubule severing by spastin (SPAST). SPAST preferentially recognizes and acts on microtubules decorated with short polyglutamate tails: severing activity by SPAST increases as the number of glutamates per tubulin rises from one to eight, but decreases beyond this glutamylation threshold (By similarity). Glutamylation is also involved in cilia motility (By similarity).</text>
</comment>
<comment type="similarity">
    <text evidence="5">Belongs to the tubulin family.</text>
</comment>
<name>TBAL3_MOUSE</name>
<gene>
    <name type="primary">Tubal3</name>
</gene>
<organism>
    <name type="scientific">Mus musculus</name>
    <name type="common">Mouse</name>
    <dbReference type="NCBI Taxonomy" id="10090"/>
    <lineage>
        <taxon>Eukaryota</taxon>
        <taxon>Metazoa</taxon>
        <taxon>Chordata</taxon>
        <taxon>Craniata</taxon>
        <taxon>Vertebrata</taxon>
        <taxon>Euteleostomi</taxon>
        <taxon>Mammalia</taxon>
        <taxon>Eutheria</taxon>
        <taxon>Euarchontoglires</taxon>
        <taxon>Glires</taxon>
        <taxon>Rodentia</taxon>
        <taxon>Myomorpha</taxon>
        <taxon>Muroidea</taxon>
        <taxon>Muridae</taxon>
        <taxon>Murinae</taxon>
        <taxon>Mus</taxon>
        <taxon>Mus</taxon>
    </lineage>
</organism>
<sequence length="446" mass="49988">MRECLSIHIGQAGVQIGDACWELYCLEHGIQPDGFILDHQHDNLENPKVEHMNASLDTFFHETRAGKHVPRTLFMDLEPTVIDGIRVGRYHSLFHPEQLVNGKEDAANTYARGRYSVGSEVIELVLERIRKLAEQCSGLQGFLIYRSFGGGTGSGFTSLLMERLSVEYCKKIKLEFSVYPSPRISTAVVEPYNAILTTHSTIEYSDCAFMVDNEALYDICQHKLGIERPSYASINRLIAQVSSSITASLRFEGPLNVDLIEFQTNLVPYPRIHFPITALAPIISAEKAYQEQLSVSDVTASCFEVSNQLVKCDPRLGKYMACCLLYRGDVVPKDVNEAIAAMKSRTSVQFVDWCPTGFKVGINYQPPAVVPGGDLARVQRAVCMLSNTTAIVEAWARLDHKFDLMYAKKAFLHWYITEGMELGEFVEAREDLAALEKDYEEVGLSF</sequence>
<proteinExistence type="evidence at transcript level"/>
<accession>Q3UX10</accession>
<accession>B9EJS3</accession>
<evidence type="ECO:0000250" key="1"/>
<evidence type="ECO:0000250" key="2">
    <source>
        <dbReference type="UniProtKB" id="P68363"/>
    </source>
</evidence>
<evidence type="ECO:0000250" key="3">
    <source>
        <dbReference type="UniProtKB" id="P68369"/>
    </source>
</evidence>
<evidence type="ECO:0000250" key="4">
    <source>
        <dbReference type="UniProtKB" id="Q71U36"/>
    </source>
</evidence>
<evidence type="ECO:0000305" key="5"/>
<reference key="1">
    <citation type="journal article" date="2005" name="Science">
        <title>The transcriptional landscape of the mammalian genome.</title>
        <authorList>
            <person name="Carninci P."/>
            <person name="Kasukawa T."/>
            <person name="Katayama S."/>
            <person name="Gough J."/>
            <person name="Frith M.C."/>
            <person name="Maeda N."/>
            <person name="Oyama R."/>
            <person name="Ravasi T."/>
            <person name="Lenhard B."/>
            <person name="Wells C."/>
            <person name="Kodzius R."/>
            <person name="Shimokawa K."/>
            <person name="Bajic V.B."/>
            <person name="Brenner S.E."/>
            <person name="Batalov S."/>
            <person name="Forrest A.R."/>
            <person name="Zavolan M."/>
            <person name="Davis M.J."/>
            <person name="Wilming L.G."/>
            <person name="Aidinis V."/>
            <person name="Allen J.E."/>
            <person name="Ambesi-Impiombato A."/>
            <person name="Apweiler R."/>
            <person name="Aturaliya R.N."/>
            <person name="Bailey T.L."/>
            <person name="Bansal M."/>
            <person name="Baxter L."/>
            <person name="Beisel K.W."/>
            <person name="Bersano T."/>
            <person name="Bono H."/>
            <person name="Chalk A.M."/>
            <person name="Chiu K.P."/>
            <person name="Choudhary V."/>
            <person name="Christoffels A."/>
            <person name="Clutterbuck D.R."/>
            <person name="Crowe M.L."/>
            <person name="Dalla E."/>
            <person name="Dalrymple B.P."/>
            <person name="de Bono B."/>
            <person name="Della Gatta G."/>
            <person name="di Bernardo D."/>
            <person name="Down T."/>
            <person name="Engstrom P."/>
            <person name="Fagiolini M."/>
            <person name="Faulkner G."/>
            <person name="Fletcher C.F."/>
            <person name="Fukushima T."/>
            <person name="Furuno M."/>
            <person name="Futaki S."/>
            <person name="Gariboldi M."/>
            <person name="Georgii-Hemming P."/>
            <person name="Gingeras T.R."/>
            <person name="Gojobori T."/>
            <person name="Green R.E."/>
            <person name="Gustincich S."/>
            <person name="Harbers M."/>
            <person name="Hayashi Y."/>
            <person name="Hensch T.K."/>
            <person name="Hirokawa N."/>
            <person name="Hill D."/>
            <person name="Huminiecki L."/>
            <person name="Iacono M."/>
            <person name="Ikeo K."/>
            <person name="Iwama A."/>
            <person name="Ishikawa T."/>
            <person name="Jakt M."/>
            <person name="Kanapin A."/>
            <person name="Katoh M."/>
            <person name="Kawasawa Y."/>
            <person name="Kelso J."/>
            <person name="Kitamura H."/>
            <person name="Kitano H."/>
            <person name="Kollias G."/>
            <person name="Krishnan S.P."/>
            <person name="Kruger A."/>
            <person name="Kummerfeld S.K."/>
            <person name="Kurochkin I.V."/>
            <person name="Lareau L.F."/>
            <person name="Lazarevic D."/>
            <person name="Lipovich L."/>
            <person name="Liu J."/>
            <person name="Liuni S."/>
            <person name="McWilliam S."/>
            <person name="Madan Babu M."/>
            <person name="Madera M."/>
            <person name="Marchionni L."/>
            <person name="Matsuda H."/>
            <person name="Matsuzawa S."/>
            <person name="Miki H."/>
            <person name="Mignone F."/>
            <person name="Miyake S."/>
            <person name="Morris K."/>
            <person name="Mottagui-Tabar S."/>
            <person name="Mulder N."/>
            <person name="Nakano N."/>
            <person name="Nakauchi H."/>
            <person name="Ng P."/>
            <person name="Nilsson R."/>
            <person name="Nishiguchi S."/>
            <person name="Nishikawa S."/>
            <person name="Nori F."/>
            <person name="Ohara O."/>
            <person name="Okazaki Y."/>
            <person name="Orlando V."/>
            <person name="Pang K.C."/>
            <person name="Pavan W.J."/>
            <person name="Pavesi G."/>
            <person name="Pesole G."/>
            <person name="Petrovsky N."/>
            <person name="Piazza S."/>
            <person name="Reed J."/>
            <person name="Reid J.F."/>
            <person name="Ring B.Z."/>
            <person name="Ringwald M."/>
            <person name="Rost B."/>
            <person name="Ruan Y."/>
            <person name="Salzberg S.L."/>
            <person name="Sandelin A."/>
            <person name="Schneider C."/>
            <person name="Schoenbach C."/>
            <person name="Sekiguchi K."/>
            <person name="Semple C.A."/>
            <person name="Seno S."/>
            <person name="Sessa L."/>
            <person name="Sheng Y."/>
            <person name="Shibata Y."/>
            <person name="Shimada H."/>
            <person name="Shimada K."/>
            <person name="Silva D."/>
            <person name="Sinclair B."/>
            <person name="Sperling S."/>
            <person name="Stupka E."/>
            <person name="Sugiura K."/>
            <person name="Sultana R."/>
            <person name="Takenaka Y."/>
            <person name="Taki K."/>
            <person name="Tammoja K."/>
            <person name="Tan S.L."/>
            <person name="Tang S."/>
            <person name="Taylor M.S."/>
            <person name="Tegner J."/>
            <person name="Teichmann S.A."/>
            <person name="Ueda H.R."/>
            <person name="van Nimwegen E."/>
            <person name="Verardo R."/>
            <person name="Wei C.L."/>
            <person name="Yagi K."/>
            <person name="Yamanishi H."/>
            <person name="Zabarovsky E."/>
            <person name="Zhu S."/>
            <person name="Zimmer A."/>
            <person name="Hide W."/>
            <person name="Bult C."/>
            <person name="Grimmond S.M."/>
            <person name="Teasdale R.D."/>
            <person name="Liu E.T."/>
            <person name="Brusic V."/>
            <person name="Quackenbush J."/>
            <person name="Wahlestedt C."/>
            <person name="Mattick J.S."/>
            <person name="Hume D.A."/>
            <person name="Kai C."/>
            <person name="Sasaki D."/>
            <person name="Tomaru Y."/>
            <person name="Fukuda S."/>
            <person name="Kanamori-Katayama M."/>
            <person name="Suzuki M."/>
            <person name="Aoki J."/>
            <person name="Arakawa T."/>
            <person name="Iida J."/>
            <person name="Imamura K."/>
            <person name="Itoh M."/>
            <person name="Kato T."/>
            <person name="Kawaji H."/>
            <person name="Kawagashira N."/>
            <person name="Kawashima T."/>
            <person name="Kojima M."/>
            <person name="Kondo S."/>
            <person name="Konno H."/>
            <person name="Nakano K."/>
            <person name="Ninomiya N."/>
            <person name="Nishio T."/>
            <person name="Okada M."/>
            <person name="Plessy C."/>
            <person name="Shibata K."/>
            <person name="Shiraki T."/>
            <person name="Suzuki S."/>
            <person name="Tagami M."/>
            <person name="Waki K."/>
            <person name="Watahiki A."/>
            <person name="Okamura-Oho Y."/>
            <person name="Suzuki H."/>
            <person name="Kawai J."/>
            <person name="Hayashizaki Y."/>
        </authorList>
    </citation>
    <scope>NUCLEOTIDE SEQUENCE [LARGE SCALE MRNA]</scope>
    <source>
        <strain>C57BL/6J</strain>
        <tissue>Egg</tissue>
    </source>
</reference>
<reference key="2">
    <citation type="journal article" date="2004" name="Genome Res.">
        <title>The status, quality, and expansion of the NIH full-length cDNA project: the Mammalian Gene Collection (MGC).</title>
        <authorList>
            <consortium name="The MGC Project Team"/>
        </authorList>
    </citation>
    <scope>NUCLEOTIDE SEQUENCE [LARGE SCALE MRNA]</scope>
    <source>
        <tissue>Brain</tissue>
    </source>
</reference>
<keyword id="KW-0963">Cytoplasm</keyword>
<keyword id="KW-0206">Cytoskeleton</keyword>
<keyword id="KW-0342">GTP-binding</keyword>
<keyword id="KW-0378">Hydrolase</keyword>
<keyword id="KW-0460">Magnesium</keyword>
<keyword id="KW-0479">Metal-binding</keyword>
<keyword id="KW-0493">Microtubule</keyword>
<keyword id="KW-0547">Nucleotide-binding</keyword>
<keyword id="KW-1185">Reference proteome</keyword>
<protein>
    <recommendedName>
        <fullName>Tubulin alpha chain-like 3</fullName>
        <ecNumber evidence="2">3.6.5.-</ecNumber>
    </recommendedName>
</protein>